<protein>
    <recommendedName>
        <fullName>Nitrogen regulatory protein areA</fullName>
    </recommendedName>
    <alternativeName>
        <fullName>Nitrogen regulator nmc</fullName>
    </alternativeName>
</protein>
<accession>O13508</accession>
<organism>
    <name type="scientific">Penicillium roqueforti</name>
    <dbReference type="NCBI Taxonomy" id="5082"/>
    <lineage>
        <taxon>Eukaryota</taxon>
        <taxon>Fungi</taxon>
        <taxon>Dikarya</taxon>
        <taxon>Ascomycota</taxon>
        <taxon>Pezizomycotina</taxon>
        <taxon>Eurotiomycetes</taxon>
        <taxon>Eurotiomycetidae</taxon>
        <taxon>Eurotiales</taxon>
        <taxon>Aspergillaceae</taxon>
        <taxon>Penicillium</taxon>
    </lineage>
</organism>
<evidence type="ECO:0000255" key="1">
    <source>
        <dbReference type="PROSITE-ProRule" id="PRU00094"/>
    </source>
</evidence>
<evidence type="ECO:0000256" key="2">
    <source>
        <dbReference type="SAM" id="MobiDB-lite"/>
    </source>
</evidence>
<reference key="1">
    <citation type="submission" date="1998-10" db="EMBL/GenBank/DDBJ databases">
        <authorList>
            <person name="Gente S."/>
            <person name="Poussereau N."/>
            <person name="Fevre M."/>
        </authorList>
    </citation>
    <scope>NUCLEOTIDE SEQUENCE [GENOMIC DNA]</scope>
    <source>
        <strain>P2</strain>
    </source>
</reference>
<dbReference type="EMBL" id="AJ001530">
    <property type="protein sequence ID" value="CAA04815.1"/>
    <property type="molecule type" value="Genomic_DNA"/>
</dbReference>
<dbReference type="GO" id="GO:0005634">
    <property type="term" value="C:nucleus"/>
    <property type="evidence" value="ECO:0007669"/>
    <property type="project" value="UniProtKB-SubCell"/>
</dbReference>
<dbReference type="GO" id="GO:0000981">
    <property type="term" value="F:DNA-binding transcription factor activity, RNA polymerase II-specific"/>
    <property type="evidence" value="ECO:0007669"/>
    <property type="project" value="TreeGrafter"/>
</dbReference>
<dbReference type="GO" id="GO:0000978">
    <property type="term" value="F:RNA polymerase II cis-regulatory region sequence-specific DNA binding"/>
    <property type="evidence" value="ECO:0007669"/>
    <property type="project" value="TreeGrafter"/>
</dbReference>
<dbReference type="GO" id="GO:0008270">
    <property type="term" value="F:zinc ion binding"/>
    <property type="evidence" value="ECO:0007669"/>
    <property type="project" value="UniProtKB-KW"/>
</dbReference>
<dbReference type="GO" id="GO:0000122">
    <property type="term" value="P:negative regulation of transcription by RNA polymerase II"/>
    <property type="evidence" value="ECO:0007669"/>
    <property type="project" value="TreeGrafter"/>
</dbReference>
<dbReference type="GO" id="GO:0042128">
    <property type="term" value="P:nitrate assimilation"/>
    <property type="evidence" value="ECO:0007669"/>
    <property type="project" value="UniProtKB-KW"/>
</dbReference>
<dbReference type="GO" id="GO:0045944">
    <property type="term" value="P:positive regulation of transcription by RNA polymerase II"/>
    <property type="evidence" value="ECO:0007669"/>
    <property type="project" value="TreeGrafter"/>
</dbReference>
<dbReference type="CDD" id="cd00202">
    <property type="entry name" value="ZnF_GATA"/>
    <property type="match status" value="1"/>
</dbReference>
<dbReference type="FunFam" id="3.30.50.10:FF:000007">
    <property type="entry name" value="Nitrogen regulatory AreA, N-terminal"/>
    <property type="match status" value="1"/>
</dbReference>
<dbReference type="Gene3D" id="3.30.50.10">
    <property type="entry name" value="Erythroid Transcription Factor GATA-1, subunit A"/>
    <property type="match status" value="1"/>
</dbReference>
<dbReference type="InterPro" id="IPR013860">
    <property type="entry name" value="AreA_GATA"/>
</dbReference>
<dbReference type="InterPro" id="IPR011420">
    <property type="entry name" value="AreA_N"/>
</dbReference>
<dbReference type="InterPro" id="IPR039355">
    <property type="entry name" value="Transcription_factor_GATA"/>
</dbReference>
<dbReference type="InterPro" id="IPR000679">
    <property type="entry name" value="Znf_GATA"/>
</dbReference>
<dbReference type="InterPro" id="IPR013088">
    <property type="entry name" value="Znf_NHR/GATA"/>
</dbReference>
<dbReference type="PANTHER" id="PTHR10071:SF281">
    <property type="entry name" value="BOX A-BINDING FACTOR-RELATED"/>
    <property type="match status" value="1"/>
</dbReference>
<dbReference type="PANTHER" id="PTHR10071">
    <property type="entry name" value="TRANSCRIPTION FACTOR GATA FAMILY MEMBER"/>
    <property type="match status" value="1"/>
</dbReference>
<dbReference type="Pfam" id="PF07573">
    <property type="entry name" value="AreA_N"/>
    <property type="match status" value="1"/>
</dbReference>
<dbReference type="Pfam" id="PF00320">
    <property type="entry name" value="GATA"/>
    <property type="match status" value="1"/>
</dbReference>
<dbReference type="Pfam" id="PF08550">
    <property type="entry name" value="GATA_AreA"/>
    <property type="match status" value="1"/>
</dbReference>
<dbReference type="PRINTS" id="PR00619">
    <property type="entry name" value="GATAZNFINGER"/>
</dbReference>
<dbReference type="SMART" id="SM00401">
    <property type="entry name" value="ZnF_GATA"/>
    <property type="match status" value="1"/>
</dbReference>
<dbReference type="SUPFAM" id="SSF57716">
    <property type="entry name" value="Glucocorticoid receptor-like (DNA-binding domain)"/>
    <property type="match status" value="1"/>
</dbReference>
<dbReference type="PROSITE" id="PS00344">
    <property type="entry name" value="GATA_ZN_FINGER_1"/>
    <property type="match status" value="1"/>
</dbReference>
<dbReference type="PROSITE" id="PS50114">
    <property type="entry name" value="GATA_ZN_FINGER_2"/>
    <property type="match status" value="1"/>
</dbReference>
<name>AREA_PENRO</name>
<sequence length="860" mass="91616">MDGIHHGGHGRARPSHPMAFPDFDADSHMMSDDFSLDTPFSPSGSSNANDTVLGNSIFPEWTNGVSRGDSPDEMQRKDPLGAQIWKLYTRTKSQLPNQERMENLTWRMMAMNLKRKEREQQARASETLSPTPSGIAQMRLSDQPSPAGGDLAHDTTSDPMNLDDFIVPFDSPAEHSSHPIDRHFTATPTGSIPIKSRKDHAMMDSSTAASFPHPPQDQRTNSEFGYVARRVRKTSVDDRQFFAGLSVPTRKRPAEASPQVPPVSNAMMAQHSELSSALPDYSLDHPPSAYALSGNGTVGPRRPQHHHTHSNIPYGLDTYGISENHGLNSAGSYQQNFHFSPSDSPMTAGNPFSSLYAQTPLASSLNSTEFFSPPPSGYQSTVSTPQPIYEGEQSIFFSDAPSAESHTQRRIPNYIQQRQSNLSASLQPRYMYNMSNGESHSGSAVTGPPTTHVSGFSVPPPQHINPSQVLGHGEFSTTAPSSSMFTFGGDSDNEDDDGNFGEGGGMTMPNDFASLDESGDMSAGLHWDGGFPGSIHSLPGFNAQHRKHVTIGSTDMIDGPPEWNQGGTLGRAHGSAASVSEVRNQNQDPRRYGKVPRTASTPNAAALLRQSLNGSASGPPTNHPSPSTPPESGLSSAVPSRPGSPGGSKNGDPNAGPTTCTNCFTQTTPLWRRNPEGQPLCNACGLFLKLHGVVRPLSLKTDVIKKRNRSSASTLAVGTSRSSKKSSRKNSIQHAPSTSISSRMNTSESPPSMNGSSSLGKTGVVPIAAAPPKSGPPAGVAQARAGVQVAPRRQRRLEKAPTGSDPDAKDSPKSAAPPSRSKVLPLAPAMAPPAAANPANHNIAGGQGASQEWEWLTMSL</sequence>
<gene>
    <name type="primary">AREA</name>
    <name type="synonym">NMC</name>
</gene>
<proteinExistence type="predicted"/>
<comment type="function">
    <text>Major nitrogen regulatory protein.</text>
</comment>
<comment type="subcellular location">
    <subcellularLocation>
        <location>Nucleus</location>
    </subcellularLocation>
</comment>
<feature type="chain" id="PRO_0000083468" description="Nitrogen regulatory protein areA">
    <location>
        <begin position="1"/>
        <end position="860"/>
    </location>
</feature>
<feature type="zinc finger region" description="GATA-type" evidence="1">
    <location>
        <begin position="660"/>
        <end position="684"/>
    </location>
</feature>
<feature type="region of interest" description="Disordered" evidence="2">
    <location>
        <begin position="1"/>
        <end position="24"/>
    </location>
</feature>
<feature type="region of interest" description="Disordered" evidence="2">
    <location>
        <begin position="116"/>
        <end position="159"/>
    </location>
</feature>
<feature type="region of interest" description="Disordered" evidence="2">
    <location>
        <begin position="174"/>
        <end position="193"/>
    </location>
</feature>
<feature type="region of interest" description="Disordered" evidence="2">
    <location>
        <begin position="559"/>
        <end position="600"/>
    </location>
</feature>
<feature type="region of interest" description="Disordered" evidence="2">
    <location>
        <begin position="612"/>
        <end position="658"/>
    </location>
</feature>
<feature type="region of interest" description="Disordered" evidence="2">
    <location>
        <begin position="706"/>
        <end position="850"/>
    </location>
</feature>
<feature type="compositionally biased region" description="Basic residues" evidence="2">
    <location>
        <begin position="1"/>
        <end position="14"/>
    </location>
</feature>
<feature type="compositionally biased region" description="Polar residues" evidence="2">
    <location>
        <begin position="122"/>
        <end position="144"/>
    </location>
</feature>
<feature type="compositionally biased region" description="Basic and acidic residues" evidence="2">
    <location>
        <begin position="174"/>
        <end position="184"/>
    </location>
</feature>
<feature type="compositionally biased region" description="Polar residues" evidence="2">
    <location>
        <begin position="577"/>
        <end position="587"/>
    </location>
</feature>
<feature type="compositionally biased region" description="Polar residues" evidence="2">
    <location>
        <begin position="710"/>
        <end position="719"/>
    </location>
</feature>
<feature type="compositionally biased region" description="Polar residues" evidence="2">
    <location>
        <begin position="732"/>
        <end position="746"/>
    </location>
</feature>
<feature type="compositionally biased region" description="Low complexity" evidence="2">
    <location>
        <begin position="747"/>
        <end position="758"/>
    </location>
</feature>
<feature type="compositionally biased region" description="Low complexity" evidence="2">
    <location>
        <begin position="766"/>
        <end position="791"/>
    </location>
</feature>
<feature type="compositionally biased region" description="Low complexity" evidence="2">
    <location>
        <begin position="813"/>
        <end position="840"/>
    </location>
</feature>
<keyword id="KW-0010">Activator</keyword>
<keyword id="KW-0238">DNA-binding</keyword>
<keyword id="KW-0479">Metal-binding</keyword>
<keyword id="KW-0534">Nitrate assimilation</keyword>
<keyword id="KW-0539">Nucleus</keyword>
<keyword id="KW-0804">Transcription</keyword>
<keyword id="KW-0805">Transcription regulation</keyword>
<keyword id="KW-0862">Zinc</keyword>
<keyword id="KW-0863">Zinc-finger</keyword>